<feature type="chain" id="PRO_0000357836" description="NADH-quinone oxidoreductase subunit D">
    <location>
        <begin position="1"/>
        <end position="404"/>
    </location>
</feature>
<gene>
    <name evidence="1" type="primary">nuoD</name>
    <name type="ordered locus">LBJ_0504</name>
</gene>
<proteinExistence type="inferred from homology"/>
<organism>
    <name type="scientific">Leptospira borgpetersenii serovar Hardjo-bovis (strain JB197)</name>
    <dbReference type="NCBI Taxonomy" id="355277"/>
    <lineage>
        <taxon>Bacteria</taxon>
        <taxon>Pseudomonadati</taxon>
        <taxon>Spirochaetota</taxon>
        <taxon>Spirochaetia</taxon>
        <taxon>Leptospirales</taxon>
        <taxon>Leptospiraceae</taxon>
        <taxon>Leptospira</taxon>
    </lineage>
</organism>
<sequence length="404" mass="45938">MYEKTAEHFEQKYKNLPEGHLLVNLGPSHPATHGILQNVIQIDGERIVEAESVIGYVHRCFEKLGERYTYNQFLVCTDRMNYVSTPLNNIGWILAVEKMMQVEVPDRVTYVRMIISELSRIMDHIICLGILGVDLGAFSGMLHLFHHRENIYQIIEKLTGARLTTTFCRIGGLERDIYPEFEKEVKLVCKGLKPAIEEFNSLLLKNKIFLGRTEGIGGISAENAIAYGFSGPNLRAAGVDWDVRKDKPYMLYDKVDFDVPIGEDGSVLHRSLVRMEEMRQSIRIIEQLVDGIPSGAWHADLPHAYLPEKNKVYNNMEELIYHFKIIMHGVKVPPGEHYMATEAANGELGFYIVSEGEKSPWRVHVRRPCFWYYQSFAELVRGGLLADSVATMSSLNVIAGELDC</sequence>
<dbReference type="EC" id="7.1.1.-" evidence="1"/>
<dbReference type="EMBL" id="CP000350">
    <property type="protein sequence ID" value="ABJ75201.1"/>
    <property type="molecule type" value="Genomic_DNA"/>
</dbReference>
<dbReference type="SMR" id="Q04V69"/>
<dbReference type="KEGG" id="lbj:LBJ_0504"/>
<dbReference type="HOGENOM" id="CLU_015134_1_2_12"/>
<dbReference type="Proteomes" id="UP000000656">
    <property type="component" value="Chromosome 1"/>
</dbReference>
<dbReference type="GO" id="GO:0005886">
    <property type="term" value="C:plasma membrane"/>
    <property type="evidence" value="ECO:0007669"/>
    <property type="project" value="UniProtKB-SubCell"/>
</dbReference>
<dbReference type="GO" id="GO:0051287">
    <property type="term" value="F:NAD binding"/>
    <property type="evidence" value="ECO:0007669"/>
    <property type="project" value="InterPro"/>
</dbReference>
<dbReference type="GO" id="GO:0050136">
    <property type="term" value="F:NADH:ubiquinone reductase (non-electrogenic) activity"/>
    <property type="evidence" value="ECO:0007669"/>
    <property type="project" value="UniProtKB-UniRule"/>
</dbReference>
<dbReference type="GO" id="GO:0048038">
    <property type="term" value="F:quinone binding"/>
    <property type="evidence" value="ECO:0007669"/>
    <property type="project" value="UniProtKB-KW"/>
</dbReference>
<dbReference type="Gene3D" id="1.10.645.10">
    <property type="entry name" value="Cytochrome-c3 Hydrogenase, chain B"/>
    <property type="match status" value="1"/>
</dbReference>
<dbReference type="HAMAP" id="MF_01358">
    <property type="entry name" value="NDH1_NuoD"/>
    <property type="match status" value="1"/>
</dbReference>
<dbReference type="InterPro" id="IPR001135">
    <property type="entry name" value="NADH_Q_OxRdtase_suD"/>
</dbReference>
<dbReference type="InterPro" id="IPR022885">
    <property type="entry name" value="NDH1_su_D/H"/>
</dbReference>
<dbReference type="InterPro" id="IPR029014">
    <property type="entry name" value="NiFe-Hase_large"/>
</dbReference>
<dbReference type="NCBIfam" id="NF004739">
    <property type="entry name" value="PRK06075.1"/>
    <property type="match status" value="1"/>
</dbReference>
<dbReference type="PANTHER" id="PTHR11993:SF10">
    <property type="entry name" value="NADH DEHYDROGENASE [UBIQUINONE] IRON-SULFUR PROTEIN 2, MITOCHONDRIAL"/>
    <property type="match status" value="1"/>
</dbReference>
<dbReference type="PANTHER" id="PTHR11993">
    <property type="entry name" value="NADH-UBIQUINONE OXIDOREDUCTASE 49 KDA SUBUNIT"/>
    <property type="match status" value="1"/>
</dbReference>
<dbReference type="Pfam" id="PF00346">
    <property type="entry name" value="Complex1_49kDa"/>
    <property type="match status" value="1"/>
</dbReference>
<dbReference type="SUPFAM" id="SSF56762">
    <property type="entry name" value="HydB/Nqo4-like"/>
    <property type="match status" value="1"/>
</dbReference>
<protein>
    <recommendedName>
        <fullName evidence="1">NADH-quinone oxidoreductase subunit D</fullName>
        <ecNumber evidence="1">7.1.1.-</ecNumber>
    </recommendedName>
    <alternativeName>
        <fullName evidence="1">NADH dehydrogenase I subunit D</fullName>
    </alternativeName>
    <alternativeName>
        <fullName evidence="1">NDH-1 subunit D</fullName>
    </alternativeName>
</protein>
<comment type="function">
    <text evidence="1">NDH-1 shuttles electrons from NADH, via FMN and iron-sulfur (Fe-S) centers, to quinones in the respiratory chain. The immediate electron acceptor for the enzyme in this species is believed to be ubiquinone. Couples the redox reaction to proton translocation (for every two electrons transferred, four hydrogen ions are translocated across the cytoplasmic membrane), and thus conserves the redox energy in a proton gradient.</text>
</comment>
<comment type="catalytic activity">
    <reaction evidence="1">
        <text>a quinone + NADH + 5 H(+)(in) = a quinol + NAD(+) + 4 H(+)(out)</text>
        <dbReference type="Rhea" id="RHEA:57888"/>
        <dbReference type="ChEBI" id="CHEBI:15378"/>
        <dbReference type="ChEBI" id="CHEBI:24646"/>
        <dbReference type="ChEBI" id="CHEBI:57540"/>
        <dbReference type="ChEBI" id="CHEBI:57945"/>
        <dbReference type="ChEBI" id="CHEBI:132124"/>
    </reaction>
</comment>
<comment type="subunit">
    <text evidence="1">NDH-1 is composed of 14 different subunits. Subunits NuoB, C, D, E, F, and G constitute the peripheral sector of the complex.</text>
</comment>
<comment type="subcellular location">
    <subcellularLocation>
        <location evidence="1">Cell inner membrane</location>
        <topology evidence="1">Peripheral membrane protein</topology>
        <orientation evidence="1">Cytoplasmic side</orientation>
    </subcellularLocation>
</comment>
<comment type="similarity">
    <text evidence="1">Belongs to the complex I 49 kDa subunit family.</text>
</comment>
<evidence type="ECO:0000255" key="1">
    <source>
        <dbReference type="HAMAP-Rule" id="MF_01358"/>
    </source>
</evidence>
<keyword id="KW-0997">Cell inner membrane</keyword>
<keyword id="KW-1003">Cell membrane</keyword>
<keyword id="KW-0472">Membrane</keyword>
<keyword id="KW-0520">NAD</keyword>
<keyword id="KW-0874">Quinone</keyword>
<keyword id="KW-1278">Translocase</keyword>
<keyword id="KW-0813">Transport</keyword>
<keyword id="KW-0830">Ubiquinone</keyword>
<reference key="1">
    <citation type="journal article" date="2006" name="Proc. Natl. Acad. Sci. U.S.A.">
        <title>Genome reduction in Leptospira borgpetersenii reflects limited transmission potential.</title>
        <authorList>
            <person name="Bulach D.M."/>
            <person name="Zuerner R.L."/>
            <person name="Wilson P."/>
            <person name="Seemann T."/>
            <person name="McGrath A."/>
            <person name="Cullen P.A."/>
            <person name="Davis J."/>
            <person name="Johnson M."/>
            <person name="Kuczek E."/>
            <person name="Alt D.P."/>
            <person name="Peterson-Burch B."/>
            <person name="Coppel R.L."/>
            <person name="Rood J.I."/>
            <person name="Davies J.K."/>
            <person name="Adler B."/>
        </authorList>
    </citation>
    <scope>NUCLEOTIDE SEQUENCE [LARGE SCALE GENOMIC DNA]</scope>
    <source>
        <strain>JB197</strain>
    </source>
</reference>
<accession>Q04V69</accession>
<name>NUOD_LEPBJ</name>